<organism>
    <name type="scientific">Escherichia coli (strain K12)</name>
    <dbReference type="NCBI Taxonomy" id="83333"/>
    <lineage>
        <taxon>Bacteria</taxon>
        <taxon>Pseudomonadati</taxon>
        <taxon>Pseudomonadota</taxon>
        <taxon>Gammaproteobacteria</taxon>
        <taxon>Enterobacterales</taxon>
        <taxon>Enterobacteriaceae</taxon>
        <taxon>Escherichia</taxon>
    </lineage>
</organism>
<reference evidence="16" key="1">
    <citation type="journal article" date="1989" name="Proc. Natl. Acad. Sci. U.S.A.">
        <title>OxyR, a positive regulator of hydrogen peroxide-inducible genes in Escherichia coli and Salmonella typhimurium, is homologous to a family of bacterial regulatory proteins.</title>
        <authorList>
            <person name="Christman M.F."/>
            <person name="Storz G."/>
            <person name="Ames B.N."/>
        </authorList>
    </citation>
    <scope>NUCLEOTIDE SEQUENCE [GENOMIC DNA]</scope>
    <scope>PROBABLE AUTOREGULATION</scope>
    <scope>DISRUPTION PHENOTYPE</scope>
    <scope>DNA-BINDING</scope>
    <scope>MUTAGENESIS OF ALA-233</scope>
    <source>
        <strain>K12 / CSH50</strain>
    </source>
</reference>
<reference evidence="17" key="2">
    <citation type="journal article" date="1989" name="EMBO J.">
        <title>The Escherichia coli regulatory protein OxyR discriminates between methylated and unmethylated states of the phage Mu mom promoter.</title>
        <authorList>
            <person name="Boelker M."/>
            <person name="Kahmann R."/>
        </authorList>
    </citation>
    <scope>NUCLEOTIDE SEQUENCE [GENOMIC DNA]</scope>
    <scope>FUNCTION AS A REPRESSOR</scope>
    <scope>PROBABLE AUTOREGULATION</scope>
    <scope>DISRUPTION PHENOTYPE</scope>
    <scope>DNA-BINDING</scope>
    <source>
        <strain>K12 / CSH50</strain>
    </source>
</reference>
<reference key="3">
    <citation type="journal article" date="1989" name="Mol. Gen. Genet.">
        <title>Molecular cloning and nucleotide sequencing of oxyR, the positive regulatory gene of a regulon for an adaptive response to oxidative stress in Escherichia coli: homologies between OxyR protein and a family of bacterial activator proteins.</title>
        <authorList>
            <person name="Tao K."/>
            <person name="Makino K."/>
            <person name="Yonei S."/>
            <person name="Nakata A."/>
            <person name="Shinagawa H."/>
        </authorList>
    </citation>
    <scope>NUCLEOTIDE SEQUENCE [GENOMIC DNA]</scope>
</reference>
<reference key="4">
    <citation type="journal article" date="1990" name="J. Gen. Microbiol.">
        <title>Identification and characterization of a gene that controls colony morphology and auto-aggregation in Escherichia coli K12.</title>
        <authorList>
            <person name="Warne S.R."/>
            <person name="Varley J.M."/>
            <person name="Boulnois G.J."/>
            <person name="Norton M.G."/>
        </authorList>
    </citation>
    <scope>NUCLEOTIDE SEQUENCE [GENOMIC DNA]</scope>
    <scope>PROBABLE AUTOREGULATION</scope>
    <source>
        <strain>K12</strain>
    </source>
</reference>
<reference key="5">
    <citation type="journal article" date="1993" name="Nucleic Acids Res.">
        <title>Analysis of the Escherichia coli genome. IV. DNA sequence of the region from 89.2 to 92.8 minutes.</title>
        <authorList>
            <person name="Blattner F.R."/>
            <person name="Burland V.D."/>
            <person name="Plunkett G. III"/>
            <person name="Sofia H.J."/>
            <person name="Daniels D.L."/>
        </authorList>
    </citation>
    <scope>NUCLEOTIDE SEQUENCE [LARGE SCALE GENOMIC DNA]</scope>
    <source>
        <strain>K12 / MG1655 / ATCC 47076</strain>
    </source>
</reference>
<reference key="6">
    <citation type="journal article" date="1997" name="Science">
        <title>The complete genome sequence of Escherichia coli K-12.</title>
        <authorList>
            <person name="Blattner F.R."/>
            <person name="Plunkett G. III"/>
            <person name="Bloch C.A."/>
            <person name="Perna N.T."/>
            <person name="Burland V."/>
            <person name="Riley M."/>
            <person name="Collado-Vides J."/>
            <person name="Glasner J.D."/>
            <person name="Rode C.K."/>
            <person name="Mayhew G.F."/>
            <person name="Gregor J."/>
            <person name="Davis N.W."/>
            <person name="Kirkpatrick H.A."/>
            <person name="Goeden M.A."/>
            <person name="Rose D.J."/>
            <person name="Mau B."/>
            <person name="Shao Y."/>
        </authorList>
    </citation>
    <scope>NUCLEOTIDE SEQUENCE [LARGE SCALE GENOMIC DNA]</scope>
    <source>
        <strain>K12 / MG1655 / ATCC 47076</strain>
    </source>
</reference>
<reference key="7">
    <citation type="journal article" date="2006" name="Mol. Syst. Biol.">
        <title>Highly accurate genome sequences of Escherichia coli K-12 strains MG1655 and W3110.</title>
        <authorList>
            <person name="Hayashi K."/>
            <person name="Morooka N."/>
            <person name="Yamamoto Y."/>
            <person name="Fujita K."/>
            <person name="Isono K."/>
            <person name="Choi S."/>
            <person name="Ohtsubo E."/>
            <person name="Baba T."/>
            <person name="Wanner B.L."/>
            <person name="Mori H."/>
            <person name="Horiuchi T."/>
        </authorList>
    </citation>
    <scope>NUCLEOTIDE SEQUENCE [LARGE SCALE GENOMIC DNA]</scope>
    <source>
        <strain>K12 / W3110 / ATCC 27325 / DSM 5911</strain>
    </source>
</reference>
<reference key="8">
    <citation type="journal article" date="1991" name="J. Biochem.">
        <title>Purification and characterization of the Escherichia coli OxyR protein, the positive regulator for a hydrogen peroxide-inducible regulon.</title>
        <authorList>
            <person name="Tao K."/>
            <person name="Makino K."/>
            <person name="Yonei S."/>
            <person name="Nakata A."/>
            <person name="Shinagawa H."/>
        </authorList>
    </citation>
    <scope>PROTEIN SEQUENCE OF 1-10</scope>
    <scope>FUNCTION</scope>
    <scope>PROBABLE AUTOREGULATION</scope>
    <scope>DNA-BINDING</scope>
</reference>
<reference key="9">
    <citation type="journal article" date="1998" name="Science">
        <title>Activation of the OxyR transcription factor by reversible disulfide bond formation.</title>
        <authorList>
            <person name="Zheng M."/>
            <person name="Aslund F."/>
            <person name="Storz G."/>
        </authorList>
    </citation>
    <scope>FUNCTION</scope>
    <scope>DISULFIDE BOND 199-CYS--CYS-208</scope>
    <scope>MUTAGENESIS OF CYS-199 AND CYS-208</scope>
</reference>
<reference key="10">
    <citation type="journal article" date="2002" name="Cell">
        <title>OxyR: a molecular code for redox-related signaling.</title>
        <authorList>
            <person name="Kim S.O."/>
            <person name="Merchant K."/>
            <person name="Nudelman R."/>
            <person name="Beyer W.F. Jr."/>
            <person name="Keng T."/>
            <person name="de Angelo J."/>
            <person name="Hausladen A."/>
            <person name="Stamler J.S."/>
        </authorList>
    </citation>
    <scope>ACTIVITY REGULATION</scope>
    <scope>S-NITROSYLATION AT CYS-199</scope>
    <scope>GLUTATHIONYLATION AT CYS-199</scope>
    <scope>OXIDATION AT CYS-199</scope>
    <scope>DISULFIDE BOND 180-CYS--CYS-259</scope>
</reference>
<reference key="11">
    <citation type="journal article" date="2005" name="J. Bacteriol.">
        <title>Combined inactivation and expression strategy to study gene function under physiological conditions: application to identification of new Escherichia coli adhesins.</title>
        <authorList>
            <person name="Roux A."/>
            <person name="Beloin C."/>
            <person name="Ghigo J.M."/>
        </authorList>
    </citation>
    <scope>DISRUPTION PHENOTYPE</scope>
    <source>
        <strain>K12 / MG1655 / ATCC 47076</strain>
    </source>
</reference>
<reference key="12">
    <citation type="journal article" date="2008" name="J. Bacteriol.">
        <title>Genetic interaction screens with ordered overexpression and deletion clone sets implicate the Escherichia coli GTPase YjeQ in late ribosome biogenesis.</title>
        <authorList>
            <person name="Campbell T.L."/>
            <person name="Brown E.D."/>
        </authorList>
    </citation>
    <scope>PARTIALLY SUPPRESSES AN RSGA MUTANT</scope>
    <source>
        <strain>K12</strain>
    </source>
</reference>
<reference evidence="20 21" key="13">
    <citation type="journal article" date="2001" name="Cell">
        <title>Structural basis of the redox switch in the OxyR transcription factor.</title>
        <authorList>
            <person name="Choi H."/>
            <person name="Kim S."/>
            <person name="Mukhopadhyay P."/>
            <person name="Cho S."/>
            <person name="Woo J."/>
            <person name="Storz G."/>
            <person name="Ryu S.E."/>
        </authorList>
    </citation>
    <scope>X-RAY CRYSTALLOGRAPHY (2.30 ANGSTROMS) OF 87-305 IN REDUCED AND OXIDIZED FORM</scope>
    <scope>SUBUNIT</scope>
    <scope>DISULFIDE BOND 199-CYS--CYS-208</scope>
    <scope>MUTAGENESIS OF ILE-110; LEU-124; 199-CYS--CYS-208; PHE-209; HIS-218; PHE-219 AND ARG-266</scope>
</reference>
<dbReference type="EMBL" id="J04553">
    <property type="protein sequence ID" value="AAA24257.1"/>
    <property type="molecule type" value="Genomic_DNA"/>
</dbReference>
<dbReference type="EMBL" id="X52666">
    <property type="protein sequence ID" value="CAA36893.1"/>
    <property type="molecule type" value="Genomic_DNA"/>
</dbReference>
<dbReference type="EMBL" id="X16531">
    <property type="protein sequence ID" value="CAA34534.1"/>
    <property type="molecule type" value="Genomic_DNA"/>
</dbReference>
<dbReference type="EMBL" id="M34102">
    <property type="protein sequence ID" value="AAA24176.1"/>
    <property type="molecule type" value="Genomic_DNA"/>
</dbReference>
<dbReference type="EMBL" id="U00006">
    <property type="protein sequence ID" value="AAC43067.1"/>
    <property type="molecule type" value="Genomic_DNA"/>
</dbReference>
<dbReference type="EMBL" id="U00096">
    <property type="protein sequence ID" value="AAC76943.1"/>
    <property type="molecule type" value="Genomic_DNA"/>
</dbReference>
<dbReference type="EMBL" id="AP009048">
    <property type="protein sequence ID" value="BAE77350.1"/>
    <property type="molecule type" value="Genomic_DNA"/>
</dbReference>
<dbReference type="PIR" id="D65203">
    <property type="entry name" value="RGECOX"/>
</dbReference>
<dbReference type="RefSeq" id="NP_418396.1">
    <property type="nucleotide sequence ID" value="NC_000913.3"/>
</dbReference>
<dbReference type="RefSeq" id="WP_001025939.1">
    <property type="nucleotide sequence ID" value="NZ_STEB01000037.1"/>
</dbReference>
<dbReference type="PDB" id="1I69">
    <property type="method" value="X-ray"/>
    <property type="resolution" value="2.70 A"/>
    <property type="chains" value="A/B=87-305"/>
</dbReference>
<dbReference type="PDB" id="1I6A">
    <property type="method" value="X-ray"/>
    <property type="resolution" value="2.30 A"/>
    <property type="chains" value="A=87-305"/>
</dbReference>
<dbReference type="PDBsum" id="1I69"/>
<dbReference type="PDBsum" id="1I6A"/>
<dbReference type="SMR" id="P0ACQ4"/>
<dbReference type="BioGRID" id="4263457">
    <property type="interactions" value="100"/>
</dbReference>
<dbReference type="DIP" id="DIP-10419N"/>
<dbReference type="FunCoup" id="P0ACQ4">
    <property type="interactions" value="313"/>
</dbReference>
<dbReference type="IntAct" id="P0ACQ4">
    <property type="interactions" value="2"/>
</dbReference>
<dbReference type="STRING" id="511145.b3961"/>
<dbReference type="jPOST" id="P0ACQ4"/>
<dbReference type="PaxDb" id="511145-b3961"/>
<dbReference type="EnsemblBacteria" id="AAC76943">
    <property type="protein sequence ID" value="AAC76943"/>
    <property type="gene ID" value="b3961"/>
</dbReference>
<dbReference type="GeneID" id="75203207"/>
<dbReference type="GeneID" id="948462"/>
<dbReference type="KEGG" id="ecj:JW3933"/>
<dbReference type="KEGG" id="eco:b3961"/>
<dbReference type="KEGG" id="ecoc:C3026_21405"/>
<dbReference type="PATRIC" id="fig|1411691.4.peg.2744"/>
<dbReference type="EchoBASE" id="EB0675"/>
<dbReference type="eggNOG" id="COG0583">
    <property type="taxonomic scope" value="Bacteria"/>
</dbReference>
<dbReference type="HOGENOM" id="CLU_039613_6_4_6"/>
<dbReference type="InParanoid" id="P0ACQ4"/>
<dbReference type="OMA" id="YLMPRMI"/>
<dbReference type="OrthoDB" id="9775392at2"/>
<dbReference type="PhylomeDB" id="P0ACQ4"/>
<dbReference type="BioCyc" id="EcoCyc:PD00214"/>
<dbReference type="BioCyc" id="MetaCyc:PD00214"/>
<dbReference type="EvolutionaryTrace" id="P0ACQ4"/>
<dbReference type="PRO" id="PR:P0ACQ4"/>
<dbReference type="Proteomes" id="UP000000625">
    <property type="component" value="Chromosome"/>
</dbReference>
<dbReference type="GO" id="GO:0005829">
    <property type="term" value="C:cytosol"/>
    <property type="evidence" value="ECO:0000314"/>
    <property type="project" value="EcoCyc"/>
</dbReference>
<dbReference type="GO" id="GO:0032993">
    <property type="term" value="C:protein-DNA complex"/>
    <property type="evidence" value="ECO:0000318"/>
    <property type="project" value="GO_Central"/>
</dbReference>
<dbReference type="GO" id="GO:0000987">
    <property type="term" value="F:cis-regulatory region sequence-specific DNA binding"/>
    <property type="evidence" value="ECO:0000314"/>
    <property type="project" value="EcoCyc"/>
</dbReference>
<dbReference type="GO" id="GO:0003700">
    <property type="term" value="F:DNA-binding transcription factor activity"/>
    <property type="evidence" value="ECO:0000314"/>
    <property type="project" value="EcoCyc"/>
</dbReference>
<dbReference type="GO" id="GO:0006974">
    <property type="term" value="P:DNA damage response"/>
    <property type="evidence" value="ECO:0000270"/>
    <property type="project" value="EcoliWiki"/>
</dbReference>
<dbReference type="GO" id="GO:0006355">
    <property type="term" value="P:regulation of DNA-templated transcription"/>
    <property type="evidence" value="ECO:0000318"/>
    <property type="project" value="GO_Central"/>
</dbReference>
<dbReference type="GO" id="GO:2000142">
    <property type="term" value="P:regulation of DNA-templated transcription initiation"/>
    <property type="evidence" value="ECO:0000314"/>
    <property type="project" value="EcoCyc"/>
</dbReference>
<dbReference type="GO" id="GO:0051409">
    <property type="term" value="P:response to nitrosative stress"/>
    <property type="evidence" value="ECO:0000314"/>
    <property type="project" value="EcoCyc"/>
</dbReference>
<dbReference type="GO" id="GO:0006979">
    <property type="term" value="P:response to oxidative stress"/>
    <property type="evidence" value="ECO:0000314"/>
    <property type="project" value="EcoCyc"/>
</dbReference>
<dbReference type="CDD" id="cd08411">
    <property type="entry name" value="PBP2_OxyR"/>
    <property type="match status" value="1"/>
</dbReference>
<dbReference type="FunFam" id="3.40.190.10:FF:000027">
    <property type="entry name" value="DNA-binding transcriptional regulator OxyR"/>
    <property type="match status" value="1"/>
</dbReference>
<dbReference type="FunFam" id="1.10.10.10:FF:000001">
    <property type="entry name" value="LysR family transcriptional regulator"/>
    <property type="match status" value="1"/>
</dbReference>
<dbReference type="Gene3D" id="3.40.190.10">
    <property type="entry name" value="Periplasmic binding protein-like II"/>
    <property type="match status" value="2"/>
</dbReference>
<dbReference type="Gene3D" id="1.10.10.10">
    <property type="entry name" value="Winged helix-like DNA-binding domain superfamily/Winged helix DNA-binding domain"/>
    <property type="match status" value="1"/>
</dbReference>
<dbReference type="InterPro" id="IPR005119">
    <property type="entry name" value="LysR_subst-bd"/>
</dbReference>
<dbReference type="InterPro" id="IPR000847">
    <property type="entry name" value="Tscrpt_reg_HTH_LysR"/>
</dbReference>
<dbReference type="InterPro" id="IPR036388">
    <property type="entry name" value="WH-like_DNA-bd_sf"/>
</dbReference>
<dbReference type="InterPro" id="IPR036390">
    <property type="entry name" value="WH_DNA-bd_sf"/>
</dbReference>
<dbReference type="NCBIfam" id="NF008361">
    <property type="entry name" value="PRK11151.1"/>
    <property type="match status" value="1"/>
</dbReference>
<dbReference type="PANTHER" id="PTHR30346:SF26">
    <property type="entry name" value="HYDROGEN PEROXIDE-INDUCIBLE GENES ACTIVATOR"/>
    <property type="match status" value="1"/>
</dbReference>
<dbReference type="PANTHER" id="PTHR30346">
    <property type="entry name" value="TRANSCRIPTIONAL DUAL REGULATOR HCAR-RELATED"/>
    <property type="match status" value="1"/>
</dbReference>
<dbReference type="Pfam" id="PF00126">
    <property type="entry name" value="HTH_1"/>
    <property type="match status" value="1"/>
</dbReference>
<dbReference type="Pfam" id="PF03466">
    <property type="entry name" value="LysR_substrate"/>
    <property type="match status" value="1"/>
</dbReference>
<dbReference type="PRINTS" id="PR00039">
    <property type="entry name" value="HTHLYSR"/>
</dbReference>
<dbReference type="SUPFAM" id="SSF53850">
    <property type="entry name" value="Periplasmic binding protein-like II"/>
    <property type="match status" value="1"/>
</dbReference>
<dbReference type="SUPFAM" id="SSF46785">
    <property type="entry name" value="Winged helix' DNA-binding domain"/>
    <property type="match status" value="1"/>
</dbReference>
<dbReference type="PROSITE" id="PS50931">
    <property type="entry name" value="HTH_LYSR"/>
    <property type="match status" value="1"/>
</dbReference>
<keyword id="KW-0002">3D-structure</keyword>
<keyword id="KW-0010">Activator</keyword>
<keyword id="KW-0903">Direct protein sequencing</keyword>
<keyword id="KW-1015">Disulfide bond</keyword>
<keyword id="KW-0238">DNA-binding</keyword>
<keyword id="KW-0318">Glutathionylation</keyword>
<keyword id="KW-0558">Oxidation</keyword>
<keyword id="KW-1185">Reference proteome</keyword>
<keyword id="KW-0678">Repressor</keyword>
<keyword id="KW-0702">S-nitrosylation</keyword>
<keyword id="KW-0346">Stress response</keyword>
<keyword id="KW-0804">Transcription</keyword>
<keyword id="KW-0805">Transcription regulation</keyword>
<accession>P0ACQ4</accession>
<accession>P11721</accession>
<accession>P22471</accession>
<accession>Q2M8Q6</accession>
<proteinExistence type="evidence at protein level"/>
<comment type="function">
    <text evidence="4 6 9 10">Hydrogen peroxide (H2O2) sensor. Activates the expression of a regulon of H2O2-inducible genes such as katG, gor, ahpC, ahpF, oxyS (a regulatory RNA), dps, fur and grxA in response to H2O2. Represses transcription of phage Mu mom gene in a methylation-sensitive manner; MomR binds to the mom promoter when it is unmethylated but not if it is fully methylated (PubMed:2551682). Binds DNA in the upstream regions of its target genes; more than one site may be present per gene (PubMed:1864839, PubMed:2471187, PubMed:2551682). OxyR is inactivated by reduction of its essential disulfide bond by glutaredoxin (Grx1, grxA), itself positively regulated by OxyR (PubMed:9497290). Also has a positive regulatory effect on the production of surface proteins that control the colony morphology and auto-aggregation ability (PubMed:15659678).</text>
</comment>
<comment type="activity regulation">
    <text evidence="3">Activated by oxidation of Cys-199 resulting in the alternative formation of cystine, sulfenic acid, S-nitroso- or glutathione-bound cysteine.</text>
</comment>
<comment type="subunit">
    <text evidence="15">Homodimer and homotetramer.</text>
</comment>
<comment type="induction">
    <text evidence="6 7 8">Negatively autoregulated (PubMed:1864839, PubMed:2167922, PubMed:2471187, PubMed:2551682). Transcription is negatively autoregulated by OxyR binding to a short region upstream of its own coding sequence (at protein level) (PubMed:1864839, PubMed:2471187).</text>
</comment>
<comment type="PTM">
    <text evidence="2 18 19">Disulfide bond formation between Cys-199 and Cys-208 significantly rearranges the secondary structure of the protein and activates it (PubMed:11301006). The reduced and oxidized homodimers have different forms which may alter oligomerization and interaction with DNA (PubMed:11301006).</text>
</comment>
<comment type="PTM">
    <text evidence="3">Oxidized on Cys-199; the Cys-SOH formed in response to oxidative signaling triggers a conformational change and the onset of transcriptional activity with a specific DNA-binding affinity. Cys-199-SOH rapidly reacts with Cys-208-SH to form a disulfide bond.</text>
</comment>
<comment type="PTM">
    <text evidence="3">S-nitrosylation in response to nitrosative signaling triggers a conformational change and the onset of transcriptional activity with a specific DNA-binding affinity.</text>
</comment>
<comment type="PTM">
    <text evidence="3">Glutathionylation in response to redox signaling triggers the onset of transcriptional activity with a specific DNA-binding affinity.</text>
</comment>
<comment type="disruption phenotype">
    <text evidence="4 7 9">Hypersensitivity to peroxides (PubMed:2471187). Increased expression of phage Mu mom gene, hypersensitive to H2O2 (PubMed:2551682). 2-fold increase in adhesion due to overproduction of antigen 43 (flu) (PubMed:15659678).</text>
</comment>
<comment type="miscellaneous">
    <text evidence="10">Oxidized OxyR can be reduced and inactivated by glutaredoxin 1, the product of grxA, whose expression is regulated by OxyR itself (PubMed:9497290).</text>
</comment>
<comment type="miscellaneous">
    <text evidence="5">Identified as a multicopy suppressor of the slow growth phenotype of an rsgA (yjeQ) deletion mutant.</text>
</comment>
<comment type="similarity">
    <text evidence="14">Belongs to the LysR transcriptional regulatory family.</text>
</comment>
<name>OXYR_ECOLI</name>
<gene>
    <name evidence="11" type="primary">oxyR</name>
    <name evidence="13" type="synonym">momR</name>
    <name evidence="12" type="synonym">mor</name>
    <name type="ordered locus">b3961</name>
    <name type="ordered locus">JW3933</name>
</gene>
<feature type="chain" id="PRO_0000105728" description="DNA-binding transcriptional dual regulator OxyR">
    <location>
        <begin position="1"/>
        <end position="305"/>
    </location>
</feature>
<feature type="domain" description="HTH lysR-type" evidence="1">
    <location>
        <begin position="1"/>
        <end position="58"/>
    </location>
</feature>
<feature type="DNA-binding region" description="H-T-H motif" evidence="1">
    <location>
        <begin position="18"/>
        <end position="37"/>
    </location>
</feature>
<feature type="modified residue" description="Cysteine sulfenic acid (-SOH); alternate" evidence="3">
    <location>
        <position position="199"/>
    </location>
</feature>
<feature type="modified residue" description="S-glutathionyl cysteine; alternate" evidence="3">
    <location>
        <position position="199"/>
    </location>
</feature>
<feature type="modified residue" description="S-nitrosocysteine; alternate" evidence="3">
    <location>
        <position position="199"/>
    </location>
</feature>
<feature type="disulfide bond" evidence="3">
    <location>
        <begin position="180"/>
        <end position="259"/>
    </location>
</feature>
<feature type="disulfide bond" description="Alternate" evidence="10 21">
    <location>
        <begin position="199"/>
        <end position="208"/>
    </location>
</feature>
<feature type="mutagenesis site" description="Resistant to H2O2, constitutively expresses oxyS, probably destabilizes the reduced homodimer." evidence="2">
    <original>I</original>
    <variation>D</variation>
    <location>
        <position position="110"/>
    </location>
</feature>
<feature type="mutagenesis site" description="Extremely sensitive to H2O2, almost no oxyS induction, probably destabilizes both reduced and oxidized homodimers." evidence="2">
    <original>L</original>
    <variation>D</variation>
    <location>
        <position position="124"/>
    </location>
</feature>
<feature type="mutagenesis site" description="Increased resistance to H2O2, constitutive oxyS expression." evidence="2">
    <original>CLRDQAMGFC</original>
    <variation>QGG</variation>
    <location>
        <begin position="199"/>
        <end position="208"/>
    </location>
</feature>
<feature type="mutagenesis site" description="No activation following redox signaling." evidence="10">
    <original>C</original>
    <variation>S</variation>
    <variation>A</variation>
    <location>
        <position position="199"/>
    </location>
</feature>
<feature type="mutagenesis site" description="No activation following redox signaling." evidence="10">
    <original>C</original>
    <variation>S</variation>
    <variation>A</variation>
    <location>
        <position position="208"/>
    </location>
</feature>
<feature type="mutagenesis site" description="Partial H2O2 sensitivity, reduces oxyS induction." evidence="2">
    <original>F</original>
    <variation>A</variation>
    <variation>R</variation>
    <location>
        <position position="209"/>
    </location>
</feature>
<feature type="mutagenesis site" description="Increased sensitivity to H2O2, reduced oxyS induction, wild-type repression and DNA binding under reduced conditions, probably destabilizes the oxidized dimer." evidence="2">
    <original>H</original>
    <variation>D</variation>
    <location>
        <position position="218"/>
    </location>
</feature>
<feature type="mutagenesis site" description="Increased sensitivity to H2O2, reduced oxyS induction, wild-type repression and DNA binding under reduced conditions, probably destabilizes the oxidized dimer." evidence="2">
    <original>F</original>
    <variation>A</variation>
    <location>
        <position position="219"/>
    </location>
</feature>
<feature type="mutagenesis site" description="In oxyR2; constitutively overexpresses oxyR-regulated proteins." evidence="7">
    <original>A</original>
    <variation>V</variation>
    <location>
        <position position="233"/>
    </location>
</feature>
<feature type="mutagenesis site" description="Partial H2O2 sensitivity, reduces oxyS induction." evidence="2">
    <original>R</original>
    <variation>A</variation>
    <location>
        <position position="266"/>
    </location>
</feature>
<feature type="sequence conflict" description="In Ref. 2; AAA24257." evidence="14" ref="2">
    <original>A</original>
    <variation>R</variation>
    <location>
        <position position="154"/>
    </location>
</feature>
<feature type="sequence conflict" description="In Ref. 4; AAA24176." evidence="14" ref="4">
    <original>R</original>
    <variation>A</variation>
    <location>
        <position position="249"/>
    </location>
</feature>
<feature type="strand" evidence="23">
    <location>
        <begin position="91"/>
        <end position="97"/>
    </location>
</feature>
<feature type="turn" evidence="23">
    <location>
        <begin position="99"/>
        <end position="101"/>
    </location>
</feature>
<feature type="helix" evidence="23">
    <location>
        <begin position="102"/>
        <end position="116"/>
    </location>
</feature>
<feature type="strand" evidence="23">
    <location>
        <begin position="120"/>
        <end position="126"/>
    </location>
</feature>
<feature type="helix" evidence="23">
    <location>
        <begin position="129"/>
        <end position="137"/>
    </location>
</feature>
<feature type="strand" evidence="23">
    <location>
        <begin position="142"/>
        <end position="147"/>
    </location>
</feature>
<feature type="helix" evidence="23">
    <location>
        <begin position="150"/>
        <end position="152"/>
    </location>
</feature>
<feature type="strand" evidence="23">
    <location>
        <begin position="155"/>
        <end position="170"/>
    </location>
</feature>
<feature type="helix" evidence="23">
    <location>
        <begin position="174"/>
        <end position="177"/>
    </location>
</feature>
<feature type="helix" evidence="23">
    <location>
        <begin position="183"/>
        <end position="186"/>
    </location>
</feature>
<feature type="strand" evidence="23">
    <location>
        <begin position="189"/>
        <end position="192"/>
    </location>
</feature>
<feature type="turn" evidence="23">
    <location>
        <begin position="195"/>
        <end position="198"/>
    </location>
</feature>
<feature type="helix" evidence="22">
    <location>
        <begin position="201"/>
        <end position="203"/>
    </location>
</feature>
<feature type="strand" evidence="23">
    <location>
        <begin position="213"/>
        <end position="216"/>
    </location>
</feature>
<feature type="turn" evidence="23">
    <location>
        <begin position="218"/>
        <end position="221"/>
    </location>
</feature>
<feature type="helix" evidence="23">
    <location>
        <begin position="224"/>
        <end position="232"/>
    </location>
</feature>
<feature type="strand" evidence="23">
    <location>
        <begin position="237"/>
        <end position="241"/>
    </location>
</feature>
<feature type="helix" evidence="23">
    <location>
        <begin position="242"/>
        <end position="244"/>
    </location>
</feature>
<feature type="strand" evidence="23">
    <location>
        <begin position="247"/>
        <end position="251"/>
    </location>
</feature>
<feature type="strand" evidence="23">
    <location>
        <begin position="254"/>
        <end position="257"/>
    </location>
</feature>
<feature type="strand" evidence="23">
    <location>
        <begin position="259"/>
        <end position="262"/>
    </location>
</feature>
<feature type="strand" evidence="23">
    <location>
        <begin position="265"/>
        <end position="272"/>
    </location>
</feature>
<feature type="helix" evidence="23">
    <location>
        <begin position="279"/>
        <end position="293"/>
    </location>
</feature>
<feature type="turn" evidence="23">
    <location>
        <begin position="294"/>
        <end position="297"/>
    </location>
</feature>
<evidence type="ECO:0000255" key="1">
    <source>
        <dbReference type="PROSITE-ProRule" id="PRU00253"/>
    </source>
</evidence>
<evidence type="ECO:0000269" key="2">
    <source>
    </source>
</evidence>
<evidence type="ECO:0000269" key="3">
    <source>
    </source>
</evidence>
<evidence type="ECO:0000269" key="4">
    <source>
    </source>
</evidence>
<evidence type="ECO:0000269" key="5">
    <source>
    </source>
</evidence>
<evidence type="ECO:0000269" key="6">
    <source>
    </source>
</evidence>
<evidence type="ECO:0000269" key="7">
    <source>
    </source>
</evidence>
<evidence type="ECO:0000269" key="8">
    <source>
    </source>
</evidence>
<evidence type="ECO:0000269" key="9">
    <source>
    </source>
</evidence>
<evidence type="ECO:0000269" key="10">
    <source>
    </source>
</evidence>
<evidence type="ECO:0000303" key="11">
    <source>
    </source>
</evidence>
<evidence type="ECO:0000303" key="12">
    <source>
    </source>
</evidence>
<evidence type="ECO:0000303" key="13">
    <source>
    </source>
</evidence>
<evidence type="ECO:0000305" key="14"/>
<evidence type="ECO:0000305" key="15">
    <source>
    </source>
</evidence>
<evidence type="ECO:0000312" key="16">
    <source>
        <dbReference type="EMBL" id="AAA24257.1"/>
    </source>
</evidence>
<evidence type="ECO:0000312" key="17">
    <source>
        <dbReference type="EMBL" id="CAA36893.1"/>
    </source>
</evidence>
<evidence type="ECO:0000312" key="18">
    <source>
        <dbReference type="PDB" id="1I69"/>
    </source>
</evidence>
<evidence type="ECO:0000312" key="19">
    <source>
        <dbReference type="PDB" id="1I6A"/>
    </source>
</evidence>
<evidence type="ECO:0007744" key="20">
    <source>
        <dbReference type="PDB" id="1I69"/>
    </source>
</evidence>
<evidence type="ECO:0007744" key="21">
    <source>
        <dbReference type="PDB" id="1I6A"/>
    </source>
</evidence>
<evidence type="ECO:0007829" key="22">
    <source>
        <dbReference type="PDB" id="1I69"/>
    </source>
</evidence>
<evidence type="ECO:0007829" key="23">
    <source>
        <dbReference type="PDB" id="1I6A"/>
    </source>
</evidence>
<sequence>MNIRDLEYLVALAEHRHFRRAADSCHVSQPTLSGQIRKLEDELGVMLLERTSRKVLFTQAGMLLVDQARTVLREVKVLKEMASQQGETMSGPLHIGLIPTVGPYLLPHIIPMLHQTFPKLEMYLHEAQTHQLLAQLDSGKLDCVILALVKESEAFIEVPLFDEPMLLAIYEDHPWANRECVPMADLAGEKLLMLEDGHCLRDQAMGFCFEAGADEDTHFRATSLETLRNMVAAGSGITLLPALAVPPERKRDGVVYLPCIKPEPRRTIGLVYRPGSPLRSRYEQLAEAIRARMDGHFDKVLKQAV</sequence>
<protein>
    <recommendedName>
        <fullName evidence="14">DNA-binding transcriptional dual regulator OxyR</fullName>
    </recommendedName>
    <alternativeName>
        <fullName>Hydrogen peroxide-inducible genes activator</fullName>
    </alternativeName>
    <alternativeName>
        <fullName>Morphology and auto-aggregation control protein</fullName>
    </alternativeName>
</protein>